<evidence type="ECO:0000250" key="1"/>
<evidence type="ECO:0000255" key="2">
    <source>
        <dbReference type="HAMAP-Rule" id="MF_00291"/>
    </source>
</evidence>
<evidence type="ECO:0000305" key="3"/>
<reference key="1">
    <citation type="journal article" date="2003" name="Genome Res.">
        <title>Genome sequence of an M3 strain of Streptococcus pyogenes reveals a large-scale genomic rearrangement in invasive strains and new insights into phage evolution.</title>
        <authorList>
            <person name="Nakagawa I."/>
            <person name="Kurokawa K."/>
            <person name="Yamashita A."/>
            <person name="Nakata M."/>
            <person name="Tomiyasu Y."/>
            <person name="Okahashi N."/>
            <person name="Kawabata S."/>
            <person name="Yamazaki K."/>
            <person name="Shiba T."/>
            <person name="Yasunaga T."/>
            <person name="Hayashi H."/>
            <person name="Hattori M."/>
            <person name="Hamada S."/>
        </authorList>
    </citation>
    <scope>NUCLEOTIDE SEQUENCE [LARGE SCALE GENOMIC DNA]</scope>
    <source>
        <strain>SSI-1</strain>
    </source>
</reference>
<proteinExistence type="inferred from homology"/>
<keyword id="KW-0687">Ribonucleoprotein</keyword>
<keyword id="KW-0689">Ribosomal protein</keyword>
<protein>
    <recommendedName>
        <fullName evidence="2">Small ribosomal subunit protein uS2</fullName>
    </recommendedName>
    <alternativeName>
        <fullName evidence="3">30S ribosomal protein S2</fullName>
    </alternativeName>
</protein>
<accession>P0DE89</accession>
<accession>Q8K5L2</accession>
<comment type="similarity">
    <text evidence="2">Belongs to the universal ribosomal protein uS2 family.</text>
</comment>
<organism>
    <name type="scientific">Streptococcus pyogenes serotype M3 (strain SSI-1)</name>
    <dbReference type="NCBI Taxonomy" id="193567"/>
    <lineage>
        <taxon>Bacteria</taxon>
        <taxon>Bacillati</taxon>
        <taxon>Bacillota</taxon>
        <taxon>Bacilli</taxon>
        <taxon>Lactobacillales</taxon>
        <taxon>Streptococcaceae</taxon>
        <taxon>Streptococcus</taxon>
    </lineage>
</organism>
<name>RS2_STRPQ</name>
<sequence>MAVISMKQLLEAGVHFGHQTRRWNPKMAKYIFTERNGIHVIDLQQTVKLADQAYEFVRDAAANDAVILFVGTKKQAAEAVADEATRAGQYFINHRWLGGTLTNWGTIQKRIARLKEIKRMEEEGTFDVLPKKEVALLNKQRARLEKFLGGIEDMPRIPDVMYVVDPHKEQIAVKEAKKLGIPVVAMVDTNADPDDIDIIIPANDDAIRAVKLITAKLADAIIEGRQGEDADVAFEADTQADSIEDIVEVVEGDNA</sequence>
<dbReference type="EMBL" id="BA000034">
    <property type="protein sequence ID" value="BAC64874.1"/>
    <property type="molecule type" value="Genomic_DNA"/>
</dbReference>
<dbReference type="RefSeq" id="WP_011055079.1">
    <property type="nucleotide sequence ID" value="NC_004606.1"/>
</dbReference>
<dbReference type="SMR" id="P0DE89"/>
<dbReference type="KEGG" id="sps:SPs1779"/>
<dbReference type="HOGENOM" id="CLU_040318_1_2_9"/>
<dbReference type="GO" id="GO:0022627">
    <property type="term" value="C:cytosolic small ribosomal subunit"/>
    <property type="evidence" value="ECO:0007669"/>
    <property type="project" value="TreeGrafter"/>
</dbReference>
<dbReference type="GO" id="GO:0003735">
    <property type="term" value="F:structural constituent of ribosome"/>
    <property type="evidence" value="ECO:0007669"/>
    <property type="project" value="InterPro"/>
</dbReference>
<dbReference type="GO" id="GO:0006412">
    <property type="term" value="P:translation"/>
    <property type="evidence" value="ECO:0007669"/>
    <property type="project" value="UniProtKB-UniRule"/>
</dbReference>
<dbReference type="CDD" id="cd01425">
    <property type="entry name" value="RPS2"/>
    <property type="match status" value="1"/>
</dbReference>
<dbReference type="FunFam" id="1.10.287.610:FF:000001">
    <property type="entry name" value="30S ribosomal protein S2"/>
    <property type="match status" value="1"/>
</dbReference>
<dbReference type="Gene3D" id="3.40.50.10490">
    <property type="entry name" value="Glucose-6-phosphate isomerase like protein, domain 1"/>
    <property type="match status" value="1"/>
</dbReference>
<dbReference type="Gene3D" id="1.10.287.610">
    <property type="entry name" value="Helix hairpin bin"/>
    <property type="match status" value="1"/>
</dbReference>
<dbReference type="HAMAP" id="MF_00291_B">
    <property type="entry name" value="Ribosomal_uS2_B"/>
    <property type="match status" value="1"/>
</dbReference>
<dbReference type="InterPro" id="IPR001865">
    <property type="entry name" value="Ribosomal_uS2"/>
</dbReference>
<dbReference type="InterPro" id="IPR005706">
    <property type="entry name" value="Ribosomal_uS2_bac/mit/plastid"/>
</dbReference>
<dbReference type="InterPro" id="IPR018130">
    <property type="entry name" value="Ribosomal_uS2_CS"/>
</dbReference>
<dbReference type="InterPro" id="IPR023591">
    <property type="entry name" value="Ribosomal_uS2_flav_dom_sf"/>
</dbReference>
<dbReference type="NCBIfam" id="TIGR01011">
    <property type="entry name" value="rpsB_bact"/>
    <property type="match status" value="1"/>
</dbReference>
<dbReference type="PANTHER" id="PTHR12534">
    <property type="entry name" value="30S RIBOSOMAL PROTEIN S2 PROKARYOTIC AND ORGANELLAR"/>
    <property type="match status" value="1"/>
</dbReference>
<dbReference type="PANTHER" id="PTHR12534:SF0">
    <property type="entry name" value="SMALL RIBOSOMAL SUBUNIT PROTEIN US2M"/>
    <property type="match status" value="1"/>
</dbReference>
<dbReference type="Pfam" id="PF00318">
    <property type="entry name" value="Ribosomal_S2"/>
    <property type="match status" value="1"/>
</dbReference>
<dbReference type="PRINTS" id="PR00395">
    <property type="entry name" value="RIBOSOMALS2"/>
</dbReference>
<dbReference type="SUPFAM" id="SSF52313">
    <property type="entry name" value="Ribosomal protein S2"/>
    <property type="match status" value="1"/>
</dbReference>
<dbReference type="PROSITE" id="PS00962">
    <property type="entry name" value="RIBOSOMAL_S2_1"/>
    <property type="match status" value="1"/>
</dbReference>
<feature type="initiator methionine" description="Removed" evidence="1">
    <location>
        <position position="1"/>
    </location>
</feature>
<feature type="chain" id="PRO_0000411534" description="Small ribosomal subunit protein uS2">
    <location>
        <begin position="2"/>
        <end position="255"/>
    </location>
</feature>
<gene>
    <name evidence="2" type="primary">rpsB</name>
    <name type="ordered locus">SPs1779</name>
</gene>